<accession>P19526</accession>
<accession>O14505</accession>
<accession>O14506</accession>
<accession>O14507</accession>
<reference key="1">
    <citation type="journal article" date="1990" name="Proc. Natl. Acad. Sci. U.S.A.">
        <title>Molecular cloning, sequence, and expression of a human GDP-L-fucose:beta-D-galactoside 2-alpha-L-fucosyltransferase cDNA that can form the H blood group antigen.</title>
        <authorList>
            <person name="Larsen R.D."/>
            <person name="Ernst L.K."/>
            <person name="Nair R.P."/>
            <person name="Lowe J.B."/>
        </authorList>
    </citation>
    <scope>NUCLEOTIDE SEQUENCE [MRNA]</scope>
    <scope>FUNCTION</scope>
    <scope>CATALYTIC ACTIVITY</scope>
    <scope>BIOPHYSICOCHEMICAL PROPERTIES</scope>
</reference>
<reference key="2">
    <citation type="journal article" date="1997" name="Transfusion">
        <title>Polymorphism of the h allele and the population frequency of sporadic nonfunctional alleles.</title>
        <authorList>
            <person name="Wagner F.F."/>
            <person name="Flegel W.A."/>
        </authorList>
    </citation>
    <scope>NUCLEOTIDE SEQUENCE [GENOMIC DNA]</scope>
    <scope>INVOLVEMENT IN BOMBAY PHENOTYPE</scope>
    <scope>VARIANTS CYS-154; CYS-171; GLU-259; VAL-315 AND CYS-349</scope>
</reference>
<reference key="3">
    <citation type="journal article" date="1997" name="Blood">
        <title>Wide variety of point mutations in the H gene of Bombay and para-Bombay individuals which inactivate H enzyme.</title>
        <authorList>
            <person name="Kaneko M."/>
            <person name="Nishihara S."/>
            <person name="Shinya N."/>
            <person name="Kudo T."/>
            <person name="Iwasaki H."/>
            <person name="Seno T."/>
            <person name="Okubo Y."/>
            <person name="Narimatsu H."/>
        </authorList>
    </citation>
    <scope>NUCLEOTIDE SEQUENCE [GENOMIC DNA]</scope>
    <scope>INVOLVEMENT IN BOMBAY AND PARA-BOMBAY PHENOTYPES</scope>
    <scope>VARIANTS TYR-148; HIS-154; HIS-241 AND LYS-348</scope>
</reference>
<reference key="4">
    <citation type="submission" date="2005-02" db="EMBL/GenBank/DDBJ databases">
        <authorList>
            <consortium name="SeattleSNPs variation discovery resource"/>
        </authorList>
    </citation>
    <scope>NUCLEOTIDE SEQUENCE [GENOMIC DNA]</scope>
    <scope>VARIANT VAL-12</scope>
</reference>
<reference key="5">
    <citation type="journal article" date="2004" name="Nature">
        <title>The DNA sequence and biology of human chromosome 19.</title>
        <authorList>
            <person name="Grimwood J."/>
            <person name="Gordon L.A."/>
            <person name="Olsen A.S."/>
            <person name="Terry A."/>
            <person name="Schmutz J."/>
            <person name="Lamerdin J.E."/>
            <person name="Hellsten U."/>
            <person name="Goodstein D."/>
            <person name="Couronne O."/>
            <person name="Tran-Gyamfi M."/>
            <person name="Aerts A."/>
            <person name="Altherr M."/>
            <person name="Ashworth L."/>
            <person name="Bajorek E."/>
            <person name="Black S."/>
            <person name="Branscomb E."/>
            <person name="Caenepeel S."/>
            <person name="Carrano A.V."/>
            <person name="Caoile C."/>
            <person name="Chan Y.M."/>
            <person name="Christensen M."/>
            <person name="Cleland C.A."/>
            <person name="Copeland A."/>
            <person name="Dalin E."/>
            <person name="Dehal P."/>
            <person name="Denys M."/>
            <person name="Detter J.C."/>
            <person name="Escobar J."/>
            <person name="Flowers D."/>
            <person name="Fotopulos D."/>
            <person name="Garcia C."/>
            <person name="Georgescu A.M."/>
            <person name="Glavina T."/>
            <person name="Gomez M."/>
            <person name="Gonzales E."/>
            <person name="Groza M."/>
            <person name="Hammon N."/>
            <person name="Hawkins T."/>
            <person name="Haydu L."/>
            <person name="Ho I."/>
            <person name="Huang W."/>
            <person name="Israni S."/>
            <person name="Jett J."/>
            <person name="Kadner K."/>
            <person name="Kimball H."/>
            <person name="Kobayashi A."/>
            <person name="Larionov V."/>
            <person name="Leem S.-H."/>
            <person name="Lopez F."/>
            <person name="Lou Y."/>
            <person name="Lowry S."/>
            <person name="Malfatti S."/>
            <person name="Martinez D."/>
            <person name="McCready P.M."/>
            <person name="Medina C."/>
            <person name="Morgan J."/>
            <person name="Nelson K."/>
            <person name="Nolan M."/>
            <person name="Ovcharenko I."/>
            <person name="Pitluck S."/>
            <person name="Pollard M."/>
            <person name="Popkie A.P."/>
            <person name="Predki P."/>
            <person name="Quan G."/>
            <person name="Ramirez L."/>
            <person name="Rash S."/>
            <person name="Retterer J."/>
            <person name="Rodriguez A."/>
            <person name="Rogers S."/>
            <person name="Salamov A."/>
            <person name="Salazar A."/>
            <person name="She X."/>
            <person name="Smith D."/>
            <person name="Slezak T."/>
            <person name="Solovyev V."/>
            <person name="Thayer N."/>
            <person name="Tice H."/>
            <person name="Tsai M."/>
            <person name="Ustaszewska A."/>
            <person name="Vo N."/>
            <person name="Wagner M."/>
            <person name="Wheeler J."/>
            <person name="Wu K."/>
            <person name="Xie G."/>
            <person name="Yang J."/>
            <person name="Dubchak I."/>
            <person name="Furey T.S."/>
            <person name="DeJong P."/>
            <person name="Dickson M."/>
            <person name="Gordon D."/>
            <person name="Eichler E.E."/>
            <person name="Pennacchio L.A."/>
            <person name="Richardson P."/>
            <person name="Stubbs L."/>
            <person name="Rokhsar D.S."/>
            <person name="Myers R.M."/>
            <person name="Rubin E.M."/>
            <person name="Lucas S.M."/>
        </authorList>
    </citation>
    <scope>NUCLEOTIDE SEQUENCE [LARGE SCALE GENOMIC DNA]</scope>
</reference>
<reference key="6">
    <citation type="journal article" date="2004" name="Genome Res.">
        <title>The status, quality, and expansion of the NIH full-length cDNA project: the Mammalian Gene Collection (MGC).</title>
        <authorList>
            <consortium name="The MGC Project Team"/>
        </authorList>
    </citation>
    <scope>NUCLEOTIDE SEQUENCE [LARGE SCALE MRNA]</scope>
    <source>
        <tissue>Brain</tissue>
    </source>
</reference>
<reference key="7">
    <citation type="journal article" date="2008" name="J. Cell. Physiol.">
        <title>Involvement of alpha 1-2-fucosyltransferase I (FUT1) and surface-expressed Lewis(y) (CD174) in first endothelial cell-cell contacts during angiogenesis.</title>
        <authorList>
            <person name="Moehler T.M."/>
            <person name="Sauer S."/>
            <person name="Witzel M."/>
            <person name="Andrulis M."/>
            <person name="Garcia-Vallejo J.J."/>
            <person name="Grobholz R."/>
            <person name="Willhauck-Fleckenstein M."/>
            <person name="Greiner A."/>
            <person name="Goldschmidt H."/>
            <person name="Schwartz-Albiez R."/>
        </authorList>
    </citation>
    <scope>FUNCTION</scope>
    <scope>INDUCTION</scope>
</reference>
<reference key="8">
    <citation type="journal article" date="1994" name="Proc. Natl. Acad. Sci. U.S.A.">
        <title>Molecular basis for H blood group deficiency in Bombay (Oh) and para-Bombay individuals.</title>
        <authorList>
            <person name="Kelly R.J."/>
            <person name="Ernst L.K."/>
            <person name="Larsen R.D."/>
            <person name="Bryant J.G."/>
            <person name="Robinson J.S."/>
            <person name="Lowe J.B."/>
        </authorList>
    </citation>
    <scope>INVOLVEMENT IN BOMBAY AND PARA-BOMBAY PHENOTYPES</scope>
    <scope>VARIANT HIS-164</scope>
</reference>
<reference key="9">
    <citation type="journal article" date="1997" name="Biochem. Biophys. Res. Commun.">
        <title>Missense mutation of FUT1 and deletion of FUT2 are responsible for Indian Bombay phenotype of ABO blood group system.</title>
        <authorList>
            <person name="Koda Y."/>
            <person name="Soejima M."/>
            <person name="Johnson P.H."/>
            <person name="Smart E."/>
            <person name="Kimura H."/>
        </authorList>
    </citation>
    <scope>INVOLVEMENT IN BOMBAY PHENOTYPE</scope>
    <scope>VARIANT ARG-242</scope>
</reference>
<proteinExistence type="evidence at protein level"/>
<feature type="chain" id="PRO_0000149095" description="Galactoside alpha-(1,2)-fucosyltransferase 1">
    <location>
        <begin position="1"/>
        <end position="365"/>
    </location>
</feature>
<feature type="topological domain" description="Cytoplasmic" evidence="3">
    <location>
        <begin position="1"/>
        <end position="8"/>
    </location>
</feature>
<feature type="transmembrane region" description="Helical; Signal-anchor for type II membrane protein" evidence="3">
    <location>
        <begin position="9"/>
        <end position="25"/>
    </location>
</feature>
<feature type="topological domain" description="Lumenal" evidence="3">
    <location>
        <begin position="26"/>
        <end position="365"/>
    </location>
</feature>
<feature type="glycosylation site" description="N-linked (GlcNAc...) asparagine" evidence="3">
    <location>
        <position position="65"/>
    </location>
</feature>
<feature type="glycosylation site" description="N-linked (GlcNAc...) asparagine" evidence="3">
    <location>
        <position position="327"/>
    </location>
</feature>
<feature type="sequence variant" id="VAR_022268" description="In dbSNP:rs2071699." evidence="10">
    <original>A</original>
    <variation>V</variation>
    <location>
        <position position="12"/>
    </location>
</feature>
<feature type="sequence variant" id="VAR_020536" description="Found in individuals with para-Bombay phenotype; allele H4; dbSNP:rs747442925." evidence="8">
    <original>D</original>
    <variation>Y</variation>
    <location>
        <position position="148"/>
    </location>
</feature>
<feature type="sequence variant" id="VAR_003417" description="Found in individuals with Bombay phenotype." evidence="7">
    <original>Y</original>
    <variation>C</variation>
    <location>
        <position position="154"/>
    </location>
</feature>
<feature type="sequence variant" id="VAR_020537" description="Found in individuals with para-Bombay phenotype; allele H5; dbSNP:rs757349699." evidence="8">
    <original>Y</original>
    <variation>H</variation>
    <location>
        <position position="154"/>
    </location>
</feature>
<feature type="sequence variant" id="VAR_009708" description="Found in individuals with para-Bombay phenotype; dbSNP:rs104894687." evidence="6">
    <original>L</original>
    <variation>H</variation>
    <location>
        <position position="164"/>
    </location>
</feature>
<feature type="sequence variant" id="VAR_003418" description="Found in individuals with Bombay phenotype." evidence="7">
    <original>W</original>
    <variation>C</variation>
    <location>
        <position position="171"/>
    </location>
</feature>
<feature type="sequence variant" id="VAR_020538" description="Found in individuals with para-Bombay phenotype; allele H3; dbSNP:rs765114567." evidence="8">
    <original>Y</original>
    <variation>H</variation>
    <location>
        <position position="241"/>
    </location>
</feature>
<feature type="sequence variant" id="VAR_009709" description="Found in individuals with Bombay phenotype; dbSNP:rs28934588." evidence="9">
    <original>L</original>
    <variation>R</variation>
    <location>
        <position position="242"/>
    </location>
</feature>
<feature type="sequence variant" id="VAR_003419" description="Found in individuals with Bombay phenotype." evidence="7">
    <original>V</original>
    <variation>E</variation>
    <location>
        <position position="259"/>
    </location>
</feature>
<feature type="sequence variant" id="VAR_003420" description="Found in individuals with Bombay phenotype." evidence="7">
    <original>A</original>
    <variation>V</variation>
    <location>
        <position position="315"/>
    </location>
</feature>
<feature type="sequence variant" id="VAR_020539" description="Found in individuals with para-Bombay phenotype; allele H5; dbSNP:rs764739319." evidence="8">
    <original>E</original>
    <variation>K</variation>
    <location>
        <position position="348"/>
    </location>
</feature>
<feature type="sequence variant" id="VAR_003421" description="Found in individuals with Bombay phenotype; dbSNP:rs1438752561." evidence="7">
    <original>W</original>
    <variation>C</variation>
    <location>
        <position position="349"/>
    </location>
</feature>
<protein>
    <recommendedName>
        <fullName evidence="11">Galactoside alpha-(1,2)-fucosyltransferase 1</fullName>
    </recommendedName>
    <alternativeName>
        <fullName>Alpha(1,2)FT 1</fullName>
    </alternativeName>
    <alternativeName>
        <fullName>Blood group H alpha 2-fucosyltransferase</fullName>
    </alternativeName>
    <alternativeName>
        <fullName>Fucosyltransferase 1</fullName>
    </alternativeName>
    <alternativeName>
        <fullName>GDP-L-fucose:beta-D-galactoside 2-alpha-L-fucosyltransferase 1</fullName>
    </alternativeName>
    <alternativeName>
        <fullName evidence="2">Type 1 galactoside alpha-(1,2)-fucosyltransferase FUT1</fullName>
        <ecNumber evidence="2">2.4.1.69</ecNumber>
    </alternativeName>
    <alternativeName>
        <fullName evidence="11">Type 2 galactoside alpha-(1,2)-fucosyltransferase FUT1</fullName>
        <ecNumber evidence="5">2.4.1.344</ecNumber>
    </alternativeName>
</protein>
<sequence length="365" mass="41251">MWLRSHRQLCLAFLLVCVLSVIFFLHIHQDSFPHGLGLSILCPDRRLVTPPVAIFCLPGTAMGPNASSSCPQHPASLSGTWTVYPNGRFGNQMGQYATLLALAQLNGRRAFILPAMHAALAPVFRITLPVLAPEVDSRTPWRELQLHDWMSEEYADLRDPFLKLSGFPCSWTFFHHLREQIRREFTLHDHLREEAQSVLGQLRLGRTGDRPRTFVGVHVRRGDYLQVMPQRWKGVVGDSAYLRQAMDWFRARHEAPVFVVTSNGMEWCKENIDTSQGDVTFAGDGQEATPWKDFALLTQCNHTIMTIGTFGFWAAYLAGGDTVYLANFTLPDSEFLKIFKPEAAFLPEWVGINADLSPLWTLAKP</sequence>
<dbReference type="EC" id="2.4.1.69" evidence="2"/>
<dbReference type="EC" id="2.4.1.344" evidence="5"/>
<dbReference type="EMBL" id="M35531">
    <property type="protein sequence ID" value="AAA52639.1"/>
    <property type="molecule type" value="mRNA"/>
</dbReference>
<dbReference type="EMBL" id="Z69587">
    <property type="protein sequence ID" value="CAA93435.1"/>
    <property type="molecule type" value="Genomic_DNA"/>
</dbReference>
<dbReference type="EMBL" id="AB004861">
    <property type="protein sequence ID" value="BAA20558.1"/>
    <property type="molecule type" value="Genomic_DNA"/>
</dbReference>
<dbReference type="EMBL" id="AB004862">
    <property type="protein sequence ID" value="BAA20559.1"/>
    <property type="molecule type" value="Genomic_DNA"/>
</dbReference>
<dbReference type="EMBL" id="AB004863">
    <property type="protein sequence ID" value="BAA20560.1"/>
    <property type="molecule type" value="Genomic_DNA"/>
</dbReference>
<dbReference type="EMBL" id="AY923051">
    <property type="protein sequence ID" value="AAW82437.1"/>
    <property type="molecule type" value="Genomic_DNA"/>
</dbReference>
<dbReference type="EMBL" id="AC009002">
    <property type="status" value="NOT_ANNOTATED_CDS"/>
    <property type="molecule type" value="Genomic_DNA"/>
</dbReference>
<dbReference type="EMBL" id="BC074732">
    <property type="protein sequence ID" value="AAH74732.1"/>
    <property type="molecule type" value="mRNA"/>
</dbReference>
<dbReference type="CCDS" id="CCDS12733.1"/>
<dbReference type="PIR" id="A36047">
    <property type="entry name" value="A36047"/>
</dbReference>
<dbReference type="RefSeq" id="NP_000139.1">
    <property type="nucleotide sequence ID" value="NM_000148.4"/>
</dbReference>
<dbReference type="RefSeq" id="NP_001316806.1">
    <property type="nucleotide sequence ID" value="NM_001329877.1"/>
</dbReference>
<dbReference type="RefSeq" id="NP_001371288.1">
    <property type="nucleotide sequence ID" value="NM_001384359.1"/>
</dbReference>
<dbReference type="RefSeq" id="XP_016882042.1">
    <property type="nucleotide sequence ID" value="XM_017026553.1"/>
</dbReference>
<dbReference type="SMR" id="P19526"/>
<dbReference type="BioGRID" id="108799">
    <property type="interactions" value="41"/>
</dbReference>
<dbReference type="FunCoup" id="P19526">
    <property type="interactions" value="237"/>
</dbReference>
<dbReference type="IntAct" id="P19526">
    <property type="interactions" value="32"/>
</dbReference>
<dbReference type="STRING" id="9606.ENSP00000312021"/>
<dbReference type="CAZy" id="GT11">
    <property type="family name" value="Glycosyltransferase Family 11"/>
</dbReference>
<dbReference type="GlyCosmos" id="P19526">
    <property type="glycosylation" value="2 sites, No reported glycans"/>
</dbReference>
<dbReference type="GlyGen" id="P19526">
    <property type="glycosylation" value="2 sites"/>
</dbReference>
<dbReference type="iPTMnet" id="P19526"/>
<dbReference type="PhosphoSitePlus" id="P19526"/>
<dbReference type="BioMuta" id="FUT1"/>
<dbReference type="MassIVE" id="P19526"/>
<dbReference type="PaxDb" id="9606-ENSP00000312021"/>
<dbReference type="PeptideAtlas" id="P19526"/>
<dbReference type="ProteomicsDB" id="53671"/>
<dbReference type="Antibodypedia" id="31803">
    <property type="antibodies" value="133 antibodies from 24 providers"/>
</dbReference>
<dbReference type="DNASU" id="2523"/>
<dbReference type="Ensembl" id="ENST00000645652.2">
    <property type="protein sequence ID" value="ENSP00000494643.1"/>
    <property type="gene ID" value="ENSG00000174951.12"/>
</dbReference>
<dbReference type="GeneID" id="2523"/>
<dbReference type="KEGG" id="hsa:2523"/>
<dbReference type="MANE-Select" id="ENST00000645652.2">
    <property type="protein sequence ID" value="ENSP00000494643.1"/>
    <property type="RefSeq nucleotide sequence ID" value="NM_001384359.1"/>
    <property type="RefSeq protein sequence ID" value="NP_001371288.1"/>
</dbReference>
<dbReference type="AGR" id="HGNC:4012"/>
<dbReference type="CTD" id="2523"/>
<dbReference type="DisGeNET" id="2523"/>
<dbReference type="GeneCards" id="FUT1"/>
<dbReference type="HGNC" id="HGNC:4012">
    <property type="gene designation" value="FUT1"/>
</dbReference>
<dbReference type="HPA" id="ENSG00000174951">
    <property type="expression patterns" value="Tissue enhanced (pancreas)"/>
</dbReference>
<dbReference type="MalaCards" id="FUT1"/>
<dbReference type="MIM" id="211100">
    <property type="type" value="gene"/>
</dbReference>
<dbReference type="MIM" id="616754">
    <property type="type" value="phenotype"/>
</dbReference>
<dbReference type="neXtProt" id="NX_P19526"/>
<dbReference type="OpenTargets" id="ENSG00000174951"/>
<dbReference type="PharmGKB" id="PA28428"/>
<dbReference type="VEuPathDB" id="HostDB:ENSG00000174951"/>
<dbReference type="eggNOG" id="ENOG502S316">
    <property type="taxonomic scope" value="Eukaryota"/>
</dbReference>
<dbReference type="GeneTree" id="ENSGT00390000001450"/>
<dbReference type="HOGENOM" id="CLU_043399_0_0_1"/>
<dbReference type="InParanoid" id="P19526"/>
<dbReference type="OMA" id="WTIHPDG"/>
<dbReference type="OrthoDB" id="3226at2759"/>
<dbReference type="PAN-GO" id="P19526">
    <property type="GO annotations" value="3 GO annotations based on evolutionary models"/>
</dbReference>
<dbReference type="PhylomeDB" id="P19526"/>
<dbReference type="TreeFam" id="TF315810"/>
<dbReference type="BioCyc" id="MetaCyc:HS10855-MONOMER"/>
<dbReference type="BRENDA" id="2.4.1.344">
    <property type="organism ID" value="2681"/>
</dbReference>
<dbReference type="BRENDA" id="2.4.1.69">
    <property type="organism ID" value="2681"/>
</dbReference>
<dbReference type="PathwayCommons" id="P19526"/>
<dbReference type="Reactome" id="R-HSA-9033807">
    <property type="pathway name" value="ABO blood group biosynthesis"/>
</dbReference>
<dbReference type="Reactome" id="R-HSA-9840309">
    <property type="pathway name" value="Glycosphingolipid biosynthesis"/>
</dbReference>
<dbReference type="SABIO-RK" id="P19526"/>
<dbReference type="SignaLink" id="P19526"/>
<dbReference type="UniPathway" id="UPA00378"/>
<dbReference type="BioGRID-ORCS" id="2523">
    <property type="hits" value="21 hits in 1156 CRISPR screens"/>
</dbReference>
<dbReference type="ChiTaRS" id="FUT1">
    <property type="organism name" value="human"/>
</dbReference>
<dbReference type="GeneWiki" id="FUT1"/>
<dbReference type="GenomeRNAi" id="2523"/>
<dbReference type="Pharos" id="P19526">
    <property type="development level" value="Tbio"/>
</dbReference>
<dbReference type="PRO" id="PR:P19526"/>
<dbReference type="Proteomes" id="UP000005640">
    <property type="component" value="Chromosome 19"/>
</dbReference>
<dbReference type="RNAct" id="P19526">
    <property type="molecule type" value="protein"/>
</dbReference>
<dbReference type="Bgee" id="ENSG00000174951">
    <property type="expression patterns" value="Expressed in body of pancreas and 113 other cell types or tissues"/>
</dbReference>
<dbReference type="ExpressionAtlas" id="P19526">
    <property type="expression patterns" value="baseline and differential"/>
</dbReference>
<dbReference type="GO" id="GO:0005615">
    <property type="term" value="C:extracellular space"/>
    <property type="evidence" value="ECO:0007669"/>
    <property type="project" value="Ensembl"/>
</dbReference>
<dbReference type="GO" id="GO:0005794">
    <property type="term" value="C:Golgi apparatus"/>
    <property type="evidence" value="ECO:0000304"/>
    <property type="project" value="UniProtKB"/>
</dbReference>
<dbReference type="GO" id="GO:0032580">
    <property type="term" value="C:Golgi cisterna membrane"/>
    <property type="evidence" value="ECO:0007669"/>
    <property type="project" value="UniProtKB-SubCell"/>
</dbReference>
<dbReference type="GO" id="GO:0000139">
    <property type="term" value="C:Golgi membrane"/>
    <property type="evidence" value="ECO:0000304"/>
    <property type="project" value="Reactome"/>
</dbReference>
<dbReference type="GO" id="GO:0016020">
    <property type="term" value="C:membrane"/>
    <property type="evidence" value="ECO:0000304"/>
    <property type="project" value="ProtInc"/>
</dbReference>
<dbReference type="GO" id="GO:0005886">
    <property type="term" value="C:plasma membrane"/>
    <property type="evidence" value="ECO:0000304"/>
    <property type="project" value="ProtInc"/>
</dbReference>
<dbReference type="GO" id="GO:0031127">
    <property type="term" value="F:alpha-(1,2)-fucosyltransferase activity"/>
    <property type="evidence" value="ECO:0000250"/>
    <property type="project" value="UniProtKB"/>
</dbReference>
<dbReference type="GO" id="GO:0008417">
    <property type="term" value="F:fucosyltransferase activity"/>
    <property type="evidence" value="ECO:0000304"/>
    <property type="project" value="Reactome"/>
</dbReference>
<dbReference type="GO" id="GO:0008107">
    <property type="term" value="F:galactoside 2-alpha-L-fucosyltransferase activity"/>
    <property type="evidence" value="ECO:0000318"/>
    <property type="project" value="GO_Central"/>
</dbReference>
<dbReference type="GO" id="GO:0005975">
    <property type="term" value="P:carbohydrate metabolic process"/>
    <property type="evidence" value="ECO:0000304"/>
    <property type="project" value="ProtInc"/>
</dbReference>
<dbReference type="GO" id="GO:0071377">
    <property type="term" value="P:cellular response to glucagon stimulus"/>
    <property type="evidence" value="ECO:0007669"/>
    <property type="project" value="Ensembl"/>
</dbReference>
<dbReference type="GO" id="GO:0071333">
    <property type="term" value="P:cellular response to glucose stimulus"/>
    <property type="evidence" value="ECO:0007669"/>
    <property type="project" value="Ensembl"/>
</dbReference>
<dbReference type="GO" id="GO:0071404">
    <property type="term" value="P:cellular response to low-density lipoprotein particle stimulus"/>
    <property type="evidence" value="ECO:0007669"/>
    <property type="project" value="Ensembl"/>
</dbReference>
<dbReference type="GO" id="GO:0071466">
    <property type="term" value="P:cellular response to xenobiotic stimulus"/>
    <property type="evidence" value="ECO:0007669"/>
    <property type="project" value="Ensembl"/>
</dbReference>
<dbReference type="GO" id="GO:0030968">
    <property type="term" value="P:endoplasmic reticulum unfolded protein response"/>
    <property type="evidence" value="ECO:0007669"/>
    <property type="project" value="Ensembl"/>
</dbReference>
<dbReference type="GO" id="GO:0072577">
    <property type="term" value="P:endothelial cell apoptotic process"/>
    <property type="evidence" value="ECO:0007669"/>
    <property type="project" value="Ensembl"/>
</dbReference>
<dbReference type="GO" id="GO:0036065">
    <property type="term" value="P:fucosylation"/>
    <property type="evidence" value="ECO:0000250"/>
    <property type="project" value="UniProtKB"/>
</dbReference>
<dbReference type="GO" id="GO:0006688">
    <property type="term" value="P:glycosphingolipid biosynthetic process"/>
    <property type="evidence" value="ECO:0000304"/>
    <property type="project" value="Reactome"/>
</dbReference>
<dbReference type="GO" id="GO:0042355">
    <property type="term" value="P:L-fucose catabolic process"/>
    <property type="evidence" value="ECO:0000303"/>
    <property type="project" value="UniProtKB"/>
</dbReference>
<dbReference type="GO" id="GO:2000352">
    <property type="term" value="P:negative regulation of endothelial cell apoptotic process"/>
    <property type="evidence" value="ECO:0007669"/>
    <property type="project" value="Ensembl"/>
</dbReference>
<dbReference type="GO" id="GO:0021772">
    <property type="term" value="P:olfactory bulb development"/>
    <property type="evidence" value="ECO:0000250"/>
    <property type="project" value="UniProtKB"/>
</dbReference>
<dbReference type="GO" id="GO:0009312">
    <property type="term" value="P:oligosaccharide biosynthetic process"/>
    <property type="evidence" value="ECO:0000304"/>
    <property type="project" value="Reactome"/>
</dbReference>
<dbReference type="GO" id="GO:0001954">
    <property type="term" value="P:positive regulation of cell-matrix adhesion"/>
    <property type="evidence" value="ECO:0000315"/>
    <property type="project" value="UniProtKB"/>
</dbReference>
<dbReference type="GO" id="GO:0010595">
    <property type="term" value="P:positive regulation of endothelial cell migration"/>
    <property type="evidence" value="ECO:0000315"/>
    <property type="project" value="UniProtKB"/>
</dbReference>
<dbReference type="GO" id="GO:1904906">
    <property type="term" value="P:positive regulation of endothelial cell-matrix adhesion via fibronectin"/>
    <property type="evidence" value="ECO:0000315"/>
    <property type="project" value="UniProtKB"/>
</dbReference>
<dbReference type="GO" id="GO:1903672">
    <property type="term" value="P:positive regulation of sprouting angiogenesis"/>
    <property type="evidence" value="ECO:0000315"/>
    <property type="project" value="UniProtKB"/>
</dbReference>
<dbReference type="GO" id="GO:0010898">
    <property type="term" value="P:positive regulation of triglyceride catabolic process"/>
    <property type="evidence" value="ECO:0007669"/>
    <property type="project" value="Ensembl"/>
</dbReference>
<dbReference type="GO" id="GO:0006486">
    <property type="term" value="P:protein glycosylation"/>
    <property type="evidence" value="ECO:0000250"/>
    <property type="project" value="UniProtKB"/>
</dbReference>
<dbReference type="GO" id="GO:0030155">
    <property type="term" value="P:regulation of cell adhesion"/>
    <property type="evidence" value="ECO:0000250"/>
    <property type="project" value="UniProtKB"/>
</dbReference>
<dbReference type="GO" id="GO:0001936">
    <property type="term" value="P:regulation of endothelial cell proliferation"/>
    <property type="evidence" value="ECO:0000250"/>
    <property type="project" value="UniProtKB"/>
</dbReference>
<dbReference type="GO" id="GO:0014823">
    <property type="term" value="P:response to activity"/>
    <property type="evidence" value="ECO:0007669"/>
    <property type="project" value="Ensembl"/>
</dbReference>
<dbReference type="GO" id="GO:1904640">
    <property type="term" value="P:response to methionine"/>
    <property type="evidence" value="ECO:0007669"/>
    <property type="project" value="Ensembl"/>
</dbReference>
<dbReference type="GO" id="GO:0031667">
    <property type="term" value="P:response to nutrient levels"/>
    <property type="evidence" value="ECO:0007669"/>
    <property type="project" value="Ensembl"/>
</dbReference>
<dbReference type="CDD" id="cd11301">
    <property type="entry name" value="Fut1_Fut2_like"/>
    <property type="match status" value="1"/>
</dbReference>
<dbReference type="InterPro" id="IPR002516">
    <property type="entry name" value="Glyco_trans_11"/>
</dbReference>
<dbReference type="PANTHER" id="PTHR11927">
    <property type="entry name" value="GALACTOSIDE 2-L-FUCOSYLTRANSFERASE"/>
    <property type="match status" value="1"/>
</dbReference>
<dbReference type="PANTHER" id="PTHR11927:SF4">
    <property type="entry name" value="GALACTOSIDE ALPHA-(1,2)-FUCOSYLTRANSFERASE 1"/>
    <property type="match status" value="1"/>
</dbReference>
<dbReference type="Pfam" id="PF01531">
    <property type="entry name" value="Glyco_transf_11"/>
    <property type="match status" value="1"/>
</dbReference>
<organism>
    <name type="scientific">Homo sapiens</name>
    <name type="common">Human</name>
    <dbReference type="NCBI Taxonomy" id="9606"/>
    <lineage>
        <taxon>Eukaryota</taxon>
        <taxon>Metazoa</taxon>
        <taxon>Chordata</taxon>
        <taxon>Craniata</taxon>
        <taxon>Vertebrata</taxon>
        <taxon>Euteleostomi</taxon>
        <taxon>Mammalia</taxon>
        <taxon>Eutheria</taxon>
        <taxon>Euarchontoglires</taxon>
        <taxon>Primates</taxon>
        <taxon>Haplorrhini</taxon>
        <taxon>Catarrhini</taxon>
        <taxon>Hominidae</taxon>
        <taxon>Homo</taxon>
    </lineage>
</organism>
<gene>
    <name evidence="12" type="primary">FUT1</name>
    <name type="synonym">H</name>
    <name type="synonym">HSC</name>
</gene>
<comment type="function">
    <text evidence="2 4 5">Catalyzes the transfer of L-fucose, from a guanosine diphosphate-beta-L-fucose, to the terminal galactose residue of glycoconjugates through an alpha(1,2) linkage leading to H antigen synthesis that is an intermediate substrate in the synthesis of ABO blood group antigens (PubMed:2118655). H antigen is essential for maturation of the glomerular layer of the main olfactory bulb, in cell migration and early cell-cell contacts during tumor associated angiogenesis (PubMed:18205178). Preferentially fucosylates soluble lactose and to a lesser extent fucosylates glycolipids gangliosides GA1 and GM1a (By similarity).</text>
</comment>
<comment type="catalytic activity">
    <reaction evidence="5">
        <text>a beta-D-galactosyl-(1-&gt;4)-N-acetyl-beta-D-glucosaminyl derivative + GDP-beta-L-fucose = an alpha-L-Fuc-(1-&gt;2)-beta-D-Gal-(1-&gt;4)-beta-D-GlcNAc derivative + GDP + H(+)</text>
        <dbReference type="Rhea" id="RHEA:50668"/>
        <dbReference type="ChEBI" id="CHEBI:15378"/>
        <dbReference type="ChEBI" id="CHEBI:57273"/>
        <dbReference type="ChEBI" id="CHEBI:58189"/>
        <dbReference type="ChEBI" id="CHEBI:133507"/>
        <dbReference type="ChEBI" id="CHEBI:133510"/>
        <dbReference type="EC" id="2.4.1.344"/>
    </reaction>
</comment>
<comment type="catalytic activity">
    <reaction evidence="2">
        <text>a ganglioside GA1 + GDP-beta-L-fucose = a ganglioside Fuc-GA1 + GDP + H(+)</text>
        <dbReference type="Rhea" id="RHEA:48320"/>
        <dbReference type="ChEBI" id="CHEBI:15378"/>
        <dbReference type="ChEBI" id="CHEBI:57273"/>
        <dbReference type="ChEBI" id="CHEBI:58189"/>
        <dbReference type="ChEBI" id="CHEBI:88069"/>
        <dbReference type="ChEBI" id="CHEBI:90262"/>
    </reaction>
    <physiologicalReaction direction="left-to-right" evidence="2">
        <dbReference type="Rhea" id="RHEA:48321"/>
    </physiologicalReaction>
</comment>
<comment type="catalytic activity">
    <reaction evidence="2">
        <text>a beta-D-Gal-(1-&gt;3)-beta-D-GlcNAc-(1-&gt;3)-beta-D-Gal-(1-&gt;4)-beta-D-Glc-(1&lt;-&gt;1')-Cer(d18:1(4E)) + GDP-beta-L-fucose = alpha-L-fucosyl-(1-&gt;2)- beta-D-galactosyl-(1-&gt;3)-N-acetyl-beta-D-glucosaminyl-(1-&gt;3)-beta-D-galactosyl-(1-&gt;4)-beta-D-glucosyl-(1&lt;-&gt;1')-N-acylsphing-4-enine + GDP + H(+)</text>
        <dbReference type="Rhea" id="RHEA:32175"/>
        <dbReference type="ChEBI" id="CHEBI:15378"/>
        <dbReference type="ChEBI" id="CHEBI:17292"/>
        <dbReference type="ChEBI" id="CHEBI:28743"/>
        <dbReference type="ChEBI" id="CHEBI:57273"/>
        <dbReference type="ChEBI" id="CHEBI:58189"/>
        <dbReference type="EC" id="2.4.1.69"/>
    </reaction>
    <physiologicalReaction direction="left-to-right" evidence="2">
        <dbReference type="Rhea" id="RHEA:32176"/>
    </physiologicalReaction>
</comment>
<comment type="catalytic activity">
    <reaction evidence="2">
        <text>a neolactoside nLc4Cer(d18:1(4E)) + GDP-beta-L-fucose = a neolactoside IV(2)-alpha-Fuc-nLc4Cer(d18:1(4E)) + GDP + H(+)</text>
        <dbReference type="Rhea" id="RHEA:48304"/>
        <dbReference type="ChEBI" id="CHEBI:15378"/>
        <dbReference type="ChEBI" id="CHEBI:17006"/>
        <dbReference type="ChEBI" id="CHEBI:28691"/>
        <dbReference type="ChEBI" id="CHEBI:57273"/>
        <dbReference type="ChEBI" id="CHEBI:58189"/>
    </reaction>
    <physiologicalReaction direction="left-to-right" evidence="2">
        <dbReference type="Rhea" id="RHEA:48305"/>
    </physiologicalReaction>
</comment>
<comment type="catalytic activity">
    <reaction evidence="1">
        <text>a ganglioside GM1 + GDP-beta-L-fucose = a ganglioside Fuc-GM1 + GDP + H(+)</text>
        <dbReference type="Rhea" id="RHEA:48292"/>
        <dbReference type="ChEBI" id="CHEBI:15378"/>
        <dbReference type="ChEBI" id="CHEBI:57273"/>
        <dbReference type="ChEBI" id="CHEBI:58189"/>
        <dbReference type="ChEBI" id="CHEBI:82639"/>
        <dbReference type="ChEBI" id="CHEBI:90189"/>
    </reaction>
    <physiologicalReaction direction="left-to-right" evidence="1">
        <dbReference type="Rhea" id="RHEA:48293"/>
    </physiologicalReaction>
</comment>
<comment type="catalytic activity">
    <reaction evidence="1">
        <text>beta-D-galactosyl-(1-&gt;3)-N-acetyl-D-galactosamine + GDP-beta-L-fucose = alpha-L-fucosyl-(1-&gt;2)-beta-D-galactosyl-(1-&gt;3)-N-acetyl-D-galactosamine + GDP + H(+)</text>
        <dbReference type="Rhea" id="RHEA:62964"/>
        <dbReference type="ChEBI" id="CHEBI:15378"/>
        <dbReference type="ChEBI" id="CHEBI:57273"/>
        <dbReference type="ChEBI" id="CHEBI:58189"/>
        <dbReference type="ChEBI" id="CHEBI:84728"/>
        <dbReference type="ChEBI" id="CHEBI:546807"/>
    </reaction>
    <physiologicalReaction direction="left-to-right" evidence="1">
        <dbReference type="Rhea" id="RHEA:62965"/>
    </physiologicalReaction>
</comment>
<comment type="biophysicochemical properties">
    <kinetics>
        <KM evidence="5">2.4 mM for phenyl beta-D-galactoside</KM>
    </kinetics>
</comment>
<comment type="pathway">
    <text evidence="5">Protein modification; protein glycosylation.</text>
</comment>
<comment type="subcellular location">
    <subcellularLocation>
        <location evidence="2">Golgi apparatus</location>
        <location evidence="2">Golgi stack membrane</location>
        <topology evidence="2">Single-pass type II membrane protein</topology>
    </subcellularLocation>
    <text evidence="2">Membrane-bound form in trans cisternae of Golgi.</text>
</comment>
<comment type="induction">
    <text evidence="4">Increased by TNF.</text>
</comment>
<comment type="polymorphism">
    <text evidence="6 7 8 9">Genetic variations in FUT1 define the H blood group and are responsible for the Bombay and para-Bombay phenotypes [MIM:616754]. Erythrocytes from individuals with the Bombay and para-Bombay blood group phenotypes are deficient in H antigens.</text>
</comment>
<comment type="miscellaneous">
    <text evidence="11">There are two genes (FUT1 and FUT2) which encode galactoside 2-L-fucosyltransferase. They are expressed in a tissue-specific manner with expression restricted to cells of mesodermal or endodermal origin respectively.</text>
</comment>
<comment type="similarity">
    <text evidence="11">Belongs to the glycosyltransferase 11 family.</text>
</comment>
<comment type="online information" name="Functional Glycomics Gateway - GTase">
    <link uri="http://www.functionalglycomics.org/glycomics/molecule/jsp/glycoEnzyme/viewGlycoEnzyme.jsp?gbpId=gt_hum_598"/>
    <text>Fucosyltransferase 1</text>
</comment>
<evidence type="ECO:0000250" key="1">
    <source>
        <dbReference type="UniProtKB" id="F6Q1T7"/>
    </source>
</evidence>
<evidence type="ECO:0000250" key="2">
    <source>
        <dbReference type="UniProtKB" id="O09160"/>
    </source>
</evidence>
<evidence type="ECO:0000255" key="3"/>
<evidence type="ECO:0000269" key="4">
    <source>
    </source>
</evidence>
<evidence type="ECO:0000269" key="5">
    <source>
    </source>
</evidence>
<evidence type="ECO:0000269" key="6">
    <source>
    </source>
</evidence>
<evidence type="ECO:0000269" key="7">
    <source>
    </source>
</evidence>
<evidence type="ECO:0000269" key="8">
    <source>
    </source>
</evidence>
<evidence type="ECO:0000269" key="9">
    <source>
    </source>
</evidence>
<evidence type="ECO:0000269" key="10">
    <source ref="4"/>
</evidence>
<evidence type="ECO:0000305" key="11"/>
<evidence type="ECO:0000312" key="12">
    <source>
        <dbReference type="HGNC" id="HGNC:4012"/>
    </source>
</evidence>
<name>FUT1_HUMAN</name>
<keyword id="KW-0095">Blood group antigen</keyword>
<keyword id="KW-0325">Glycoprotein</keyword>
<keyword id="KW-0328">Glycosyltransferase</keyword>
<keyword id="KW-0333">Golgi apparatus</keyword>
<keyword id="KW-0443">Lipid metabolism</keyword>
<keyword id="KW-0472">Membrane</keyword>
<keyword id="KW-1267">Proteomics identification</keyword>
<keyword id="KW-1185">Reference proteome</keyword>
<keyword id="KW-0735">Signal-anchor</keyword>
<keyword id="KW-0808">Transferase</keyword>
<keyword id="KW-0812">Transmembrane</keyword>
<keyword id="KW-1133">Transmembrane helix</keyword>